<sequence length="389" mass="42695">MVSVSEIRQAQRAEGPATIMAIGTANPSNCVEQSTYPDFYFKITNSEHKVELKEKFQRMCDKSMIKRRYMYLTEEILKENPSVCEYMAPSLDARQDMVVVEVPRLGKEAAVKAIKEWGQPKSKITHLIFCTTSGVDMPGADYQLTKLLGLRPYVKRYMMYQQGCFAGGTVLRLAKDLAENNKGARVLVVCSEVTAVTFRGPSDTHLDSLVGQALFGDGAAALIVGSDPIPEIEKPIFEMVWTAQTIAPDSEGAIDGHLVEAGLTFHLLKDVPGIVSKNIDKALIEAFQPLNISDYNSIFWIAHPGGPAILDQVEEKLGLKPEKMKATREVLSEYGNMSSACVLFILDEMRKKSAQAGLKTTGEGLDWGVLFGFGPGLTIETVVLHSVAI</sequence>
<evidence type="ECO:0000255" key="1">
    <source>
        <dbReference type="PROSITE-ProRule" id="PRU10023"/>
    </source>
</evidence>
<evidence type="ECO:0000305" key="2"/>
<dbReference type="EC" id="2.3.1.74"/>
<dbReference type="EMBL" id="U01018">
    <property type="protein sequence ID" value="AAB41561.1"/>
    <property type="molecule type" value="mRNA"/>
</dbReference>
<dbReference type="PIR" id="S44367">
    <property type="entry name" value="S44367"/>
</dbReference>
<dbReference type="SMR" id="P51077"/>
<dbReference type="UniPathway" id="UPA00154"/>
<dbReference type="GO" id="GO:0016210">
    <property type="term" value="F:naringenin-chalcone synthase activity"/>
    <property type="evidence" value="ECO:0007669"/>
    <property type="project" value="UniProtKB-EC"/>
</dbReference>
<dbReference type="GO" id="GO:0009813">
    <property type="term" value="P:flavonoid biosynthetic process"/>
    <property type="evidence" value="ECO:0007669"/>
    <property type="project" value="UniProtKB-UniPathway"/>
</dbReference>
<dbReference type="GO" id="GO:0030639">
    <property type="term" value="P:polyketide biosynthetic process"/>
    <property type="evidence" value="ECO:0007669"/>
    <property type="project" value="TreeGrafter"/>
</dbReference>
<dbReference type="CDD" id="cd00831">
    <property type="entry name" value="CHS_like"/>
    <property type="match status" value="1"/>
</dbReference>
<dbReference type="FunFam" id="3.40.47.10:FF:000014">
    <property type="entry name" value="Chalcone synthase 1"/>
    <property type="match status" value="1"/>
</dbReference>
<dbReference type="FunFam" id="3.40.47.10:FF:000025">
    <property type="entry name" value="Chalcone synthase 2"/>
    <property type="match status" value="1"/>
</dbReference>
<dbReference type="Gene3D" id="3.40.47.10">
    <property type="match status" value="2"/>
</dbReference>
<dbReference type="InterPro" id="IPR012328">
    <property type="entry name" value="Chalcone/stilbene_synt_C"/>
</dbReference>
<dbReference type="InterPro" id="IPR001099">
    <property type="entry name" value="Chalcone/stilbene_synt_N"/>
</dbReference>
<dbReference type="InterPro" id="IPR018088">
    <property type="entry name" value="Chalcone/stilbene_synthase_AS"/>
</dbReference>
<dbReference type="InterPro" id="IPR011141">
    <property type="entry name" value="Polyketide_synthase_type-III"/>
</dbReference>
<dbReference type="InterPro" id="IPR016039">
    <property type="entry name" value="Thiolase-like"/>
</dbReference>
<dbReference type="PANTHER" id="PTHR11877:SF62">
    <property type="entry name" value="CHALCONE SYNTHASE 7"/>
    <property type="match status" value="1"/>
</dbReference>
<dbReference type="PANTHER" id="PTHR11877">
    <property type="entry name" value="HYDROXYMETHYLGLUTARYL-COA SYNTHASE"/>
    <property type="match status" value="1"/>
</dbReference>
<dbReference type="Pfam" id="PF02797">
    <property type="entry name" value="Chal_sti_synt_C"/>
    <property type="match status" value="1"/>
</dbReference>
<dbReference type="Pfam" id="PF00195">
    <property type="entry name" value="Chal_sti_synt_N"/>
    <property type="match status" value="1"/>
</dbReference>
<dbReference type="PIRSF" id="PIRSF000451">
    <property type="entry name" value="PKS_III"/>
    <property type="match status" value="1"/>
</dbReference>
<dbReference type="SUPFAM" id="SSF53901">
    <property type="entry name" value="Thiolase-like"/>
    <property type="match status" value="2"/>
</dbReference>
<dbReference type="PROSITE" id="PS00441">
    <property type="entry name" value="CHALCONE_SYNTH"/>
    <property type="match status" value="1"/>
</dbReference>
<organism>
    <name type="scientific">Medicago sativa</name>
    <name type="common">Alfalfa</name>
    <dbReference type="NCBI Taxonomy" id="3879"/>
    <lineage>
        <taxon>Eukaryota</taxon>
        <taxon>Viridiplantae</taxon>
        <taxon>Streptophyta</taxon>
        <taxon>Embryophyta</taxon>
        <taxon>Tracheophyta</taxon>
        <taxon>Spermatophyta</taxon>
        <taxon>Magnoliopsida</taxon>
        <taxon>eudicotyledons</taxon>
        <taxon>Gunneridae</taxon>
        <taxon>Pentapetalae</taxon>
        <taxon>rosids</taxon>
        <taxon>fabids</taxon>
        <taxon>Fabales</taxon>
        <taxon>Fabaceae</taxon>
        <taxon>Papilionoideae</taxon>
        <taxon>50 kb inversion clade</taxon>
        <taxon>NPAAA clade</taxon>
        <taxon>Hologalegina</taxon>
        <taxon>IRL clade</taxon>
        <taxon>Trifolieae</taxon>
        <taxon>Medicago</taxon>
    </lineage>
</organism>
<comment type="function">
    <text>The primary product of this enzyme is 4,2',4',6'-tetrahydroxychalcone (also termed naringenin-chalcone or chalcone) which can under specific conditions spontaneously isomerize into naringenin.</text>
</comment>
<comment type="catalytic activity">
    <reaction evidence="1">
        <text>(E)-4-coumaroyl-CoA + 3 malonyl-CoA + 3 H(+) = 2',4,4',6'-tetrahydroxychalcone + 3 CO2 + 4 CoA</text>
        <dbReference type="Rhea" id="RHEA:11128"/>
        <dbReference type="ChEBI" id="CHEBI:15378"/>
        <dbReference type="ChEBI" id="CHEBI:15413"/>
        <dbReference type="ChEBI" id="CHEBI:16526"/>
        <dbReference type="ChEBI" id="CHEBI:57287"/>
        <dbReference type="ChEBI" id="CHEBI:57384"/>
        <dbReference type="ChEBI" id="CHEBI:85008"/>
        <dbReference type="EC" id="2.3.1.74"/>
    </reaction>
</comment>
<comment type="pathway">
    <text>Secondary metabolite biosynthesis; flavonoid biosynthesis.</text>
</comment>
<comment type="developmental stage">
    <text>Highest expression in young root tips.</text>
</comment>
<comment type="similarity">
    <text evidence="2">Belongs to the thiolase-like superfamily. Chalcone/stilbene synthases family.</text>
</comment>
<feature type="chain" id="PRO_0000216008" description="Chalcone synthase 4-1">
    <location>
        <begin position="1"/>
        <end position="389"/>
    </location>
</feature>
<feature type="active site" evidence="1">
    <location>
        <position position="164"/>
    </location>
</feature>
<name>CHS3_MEDSA</name>
<reference key="1">
    <citation type="journal article" date="1994" name="Plant Mol. Biol.">
        <title>Isolation of chalcone synthase and chalcone isomerase cDNAs from alfalfa (Medicago sativa L.): highest transcript levels occur in young roots and root tips.</title>
        <authorList>
            <person name="McKhann H.I."/>
            <person name="Hirsch A.M."/>
        </authorList>
    </citation>
    <scope>NUCLEOTIDE SEQUENCE [MRNA]</scope>
    <source>
        <strain>cv. Iroquois</strain>
        <tissue>Root nodule</tissue>
    </source>
</reference>
<gene>
    <name type="primary">CHS4-1</name>
</gene>
<proteinExistence type="evidence at transcript level"/>
<protein>
    <recommendedName>
        <fullName>Chalcone synthase 4-1</fullName>
        <ecNumber>2.3.1.74</ecNumber>
    </recommendedName>
    <alternativeName>
        <fullName>Naringenin-chalcone synthase 4-1</fullName>
    </alternativeName>
</protein>
<keyword id="KW-0012">Acyltransferase</keyword>
<keyword id="KW-0284">Flavonoid biosynthesis</keyword>
<keyword id="KW-0808">Transferase</keyword>
<accession>P51077</accession>